<proteinExistence type="evidence at transcript level"/>
<sequence>MGRLFVLTLEGKIYSCKHCGTHLALSENIVSKSFHCKHGKAYLFSKVVNVTSGEIENRMMMTGMHTVADIFCVCCGSIVGWKYETAHEKSQKYKEGKSVLERFKITGPDGSHYWASHDTHVAGSDADDV</sequence>
<name>YIPL_SOLTU</name>
<evidence type="ECO:0000255" key="1">
    <source>
        <dbReference type="PROSITE-ProRule" id="PRU01128"/>
    </source>
</evidence>
<evidence type="ECO:0000305" key="2"/>
<protein>
    <recommendedName>
        <fullName>Protein yippee-like</fullName>
    </recommendedName>
</protein>
<reference key="1">
    <citation type="submission" date="2001-05" db="EMBL/GenBank/DDBJ databases">
        <title>Elicitation of the primary and secondary metabolisms during defense in potato.</title>
        <authorList>
            <person name="Nakane E."/>
            <person name="Yoshioka H."/>
            <person name="Kawakita K."/>
            <person name="Doke N."/>
        </authorList>
    </citation>
    <scope>NUCLEOTIDE SEQUENCE [MRNA]</scope>
</reference>
<accession>P59234</accession>
<organism>
    <name type="scientific">Solanum tuberosum</name>
    <name type="common">Potato</name>
    <dbReference type="NCBI Taxonomy" id="4113"/>
    <lineage>
        <taxon>Eukaryota</taxon>
        <taxon>Viridiplantae</taxon>
        <taxon>Streptophyta</taxon>
        <taxon>Embryophyta</taxon>
        <taxon>Tracheophyta</taxon>
        <taxon>Spermatophyta</taxon>
        <taxon>Magnoliopsida</taxon>
        <taxon>eudicotyledons</taxon>
        <taxon>Gunneridae</taxon>
        <taxon>Pentapetalae</taxon>
        <taxon>asterids</taxon>
        <taxon>lamiids</taxon>
        <taxon>Solanales</taxon>
        <taxon>Solanaceae</taxon>
        <taxon>Solanoideae</taxon>
        <taxon>Solaneae</taxon>
        <taxon>Solanum</taxon>
    </lineage>
</organism>
<keyword id="KW-0479">Metal-binding</keyword>
<keyword id="KW-1185">Reference proteome</keyword>
<keyword id="KW-0862">Zinc</keyword>
<dbReference type="EMBL" id="AB061267">
    <property type="protein sequence ID" value="BAC23053.1"/>
    <property type="molecule type" value="mRNA"/>
</dbReference>
<dbReference type="RefSeq" id="NP_001274831.1">
    <property type="nucleotide sequence ID" value="NM_001287902.1"/>
</dbReference>
<dbReference type="SMR" id="P59234"/>
<dbReference type="FunCoup" id="P59234">
    <property type="interactions" value="178"/>
</dbReference>
<dbReference type="STRING" id="4113.P59234"/>
<dbReference type="PaxDb" id="4113-PGSC0003DMT400053481"/>
<dbReference type="GeneID" id="102577430"/>
<dbReference type="KEGG" id="sot:102577430"/>
<dbReference type="eggNOG" id="KOG3399">
    <property type="taxonomic scope" value="Eukaryota"/>
</dbReference>
<dbReference type="InParanoid" id="P59234"/>
<dbReference type="Proteomes" id="UP000011115">
    <property type="component" value="Unassembled WGS sequence"/>
</dbReference>
<dbReference type="ExpressionAtlas" id="P59234">
    <property type="expression patterns" value="baseline and differential"/>
</dbReference>
<dbReference type="GO" id="GO:0000151">
    <property type="term" value="C:ubiquitin ligase complex"/>
    <property type="evidence" value="ECO:0000318"/>
    <property type="project" value="GO_Central"/>
</dbReference>
<dbReference type="GO" id="GO:0046872">
    <property type="term" value="F:metal ion binding"/>
    <property type="evidence" value="ECO:0007669"/>
    <property type="project" value="UniProtKB-KW"/>
</dbReference>
<dbReference type="InterPro" id="IPR034751">
    <property type="entry name" value="Yippee"/>
</dbReference>
<dbReference type="InterPro" id="IPR004910">
    <property type="entry name" value="Yippee/Mis18/Cereblon"/>
</dbReference>
<dbReference type="InterPro" id="IPR039058">
    <property type="entry name" value="Yippee_fam"/>
</dbReference>
<dbReference type="PANTHER" id="PTHR13848">
    <property type="entry name" value="PROTEIN YIPPEE-LIKE CG15309-RELATED"/>
    <property type="match status" value="1"/>
</dbReference>
<dbReference type="Pfam" id="PF03226">
    <property type="entry name" value="Yippee-Mis18"/>
    <property type="match status" value="1"/>
</dbReference>
<dbReference type="PROSITE" id="PS51792">
    <property type="entry name" value="YIPPEE"/>
    <property type="match status" value="1"/>
</dbReference>
<feature type="chain" id="PRO_0000212408" description="Protein yippee-like">
    <location>
        <begin position="1"/>
        <end position="129"/>
    </location>
</feature>
<feature type="domain" description="Yippee" evidence="1">
    <location>
        <begin position="12"/>
        <end position="109"/>
    </location>
</feature>
<feature type="binding site" evidence="1">
    <location>
        <position position="16"/>
    </location>
    <ligand>
        <name>Zn(2+)</name>
        <dbReference type="ChEBI" id="CHEBI:29105"/>
    </ligand>
</feature>
<feature type="binding site" evidence="1">
    <location>
        <position position="19"/>
    </location>
    <ligand>
        <name>Zn(2+)</name>
        <dbReference type="ChEBI" id="CHEBI:29105"/>
    </ligand>
</feature>
<feature type="binding site" evidence="1">
    <location>
        <position position="72"/>
    </location>
    <ligand>
        <name>Zn(2+)</name>
        <dbReference type="ChEBI" id="CHEBI:29105"/>
    </ligand>
</feature>
<feature type="binding site" evidence="1">
    <location>
        <position position="75"/>
    </location>
    <ligand>
        <name>Zn(2+)</name>
        <dbReference type="ChEBI" id="CHEBI:29105"/>
    </ligand>
</feature>
<comment type="similarity">
    <text evidence="2">Belongs to the yippee family.</text>
</comment>